<feature type="chain" id="PRO_0000250309" description="Glycerol-3-phosphate acyltransferase">
    <location>
        <begin position="1"/>
        <end position="198"/>
    </location>
</feature>
<feature type="transmembrane region" description="Helical" evidence="1">
    <location>
        <begin position="2"/>
        <end position="22"/>
    </location>
</feature>
<feature type="transmembrane region" description="Helical" evidence="1">
    <location>
        <begin position="53"/>
        <end position="73"/>
    </location>
</feature>
<feature type="transmembrane region" description="Helical" evidence="1">
    <location>
        <begin position="79"/>
        <end position="99"/>
    </location>
</feature>
<feature type="transmembrane region" description="Helical" evidence="1">
    <location>
        <begin position="113"/>
        <end position="133"/>
    </location>
</feature>
<feature type="transmembrane region" description="Helical" evidence="1">
    <location>
        <begin position="152"/>
        <end position="172"/>
    </location>
</feature>
<organism>
    <name type="scientific">Lawsonia intracellularis (strain PHE/MN1-00)</name>
    <dbReference type="NCBI Taxonomy" id="363253"/>
    <lineage>
        <taxon>Bacteria</taxon>
        <taxon>Pseudomonadati</taxon>
        <taxon>Thermodesulfobacteriota</taxon>
        <taxon>Desulfovibrionia</taxon>
        <taxon>Desulfovibrionales</taxon>
        <taxon>Desulfovibrionaceae</taxon>
        <taxon>Lawsonia</taxon>
    </lineage>
</organism>
<evidence type="ECO:0000255" key="1">
    <source>
        <dbReference type="HAMAP-Rule" id="MF_01043"/>
    </source>
</evidence>
<reference key="1">
    <citation type="submission" date="2005-11" db="EMBL/GenBank/DDBJ databases">
        <title>The complete genome sequence of Lawsonia intracellularis: the causative agent of proliferative enteropathy.</title>
        <authorList>
            <person name="Kaur K."/>
            <person name="Zhang Q."/>
            <person name="Beckler D."/>
            <person name="Munir S."/>
            <person name="Li L."/>
            <person name="Kinsley K."/>
            <person name="Herron L."/>
            <person name="Peterson A."/>
            <person name="May B."/>
            <person name="Singh S."/>
            <person name="Gebhart C."/>
            <person name="Kapur V."/>
        </authorList>
    </citation>
    <scope>NUCLEOTIDE SEQUENCE [LARGE SCALE GENOMIC DNA]</scope>
    <source>
        <strain>PHE/MN1-00</strain>
    </source>
</reference>
<dbReference type="EC" id="2.3.1.275" evidence="1"/>
<dbReference type="EMBL" id="AM180252">
    <property type="protein sequence ID" value="CAJ54254.1"/>
    <property type="molecule type" value="Genomic_DNA"/>
</dbReference>
<dbReference type="RefSeq" id="WP_011526280.1">
    <property type="nucleotide sequence ID" value="NC_008011.1"/>
</dbReference>
<dbReference type="SMR" id="Q1MRX2"/>
<dbReference type="STRING" id="363253.LI0198"/>
<dbReference type="KEGG" id="lip:LI0198"/>
<dbReference type="eggNOG" id="COG0344">
    <property type="taxonomic scope" value="Bacteria"/>
</dbReference>
<dbReference type="HOGENOM" id="CLU_081254_0_2_7"/>
<dbReference type="OrthoDB" id="9777124at2"/>
<dbReference type="UniPathway" id="UPA00085"/>
<dbReference type="Proteomes" id="UP000002430">
    <property type="component" value="Chromosome"/>
</dbReference>
<dbReference type="GO" id="GO:0005886">
    <property type="term" value="C:plasma membrane"/>
    <property type="evidence" value="ECO:0007669"/>
    <property type="project" value="UniProtKB-SubCell"/>
</dbReference>
<dbReference type="GO" id="GO:0043772">
    <property type="term" value="F:acyl-phosphate glycerol-3-phosphate acyltransferase activity"/>
    <property type="evidence" value="ECO:0007669"/>
    <property type="project" value="UniProtKB-UniRule"/>
</dbReference>
<dbReference type="GO" id="GO:0008654">
    <property type="term" value="P:phospholipid biosynthetic process"/>
    <property type="evidence" value="ECO:0007669"/>
    <property type="project" value="UniProtKB-UniRule"/>
</dbReference>
<dbReference type="HAMAP" id="MF_01043">
    <property type="entry name" value="PlsY"/>
    <property type="match status" value="1"/>
</dbReference>
<dbReference type="InterPro" id="IPR003811">
    <property type="entry name" value="G3P_acylTferase_PlsY"/>
</dbReference>
<dbReference type="NCBIfam" id="TIGR00023">
    <property type="entry name" value="glycerol-3-phosphate 1-O-acyltransferase PlsY"/>
    <property type="match status" value="1"/>
</dbReference>
<dbReference type="PANTHER" id="PTHR30309:SF0">
    <property type="entry name" value="GLYCEROL-3-PHOSPHATE ACYLTRANSFERASE-RELATED"/>
    <property type="match status" value="1"/>
</dbReference>
<dbReference type="PANTHER" id="PTHR30309">
    <property type="entry name" value="INNER MEMBRANE PROTEIN YGIH"/>
    <property type="match status" value="1"/>
</dbReference>
<dbReference type="Pfam" id="PF02660">
    <property type="entry name" value="G3P_acyltransf"/>
    <property type="match status" value="1"/>
</dbReference>
<dbReference type="SMART" id="SM01207">
    <property type="entry name" value="G3P_acyltransf"/>
    <property type="match status" value="1"/>
</dbReference>
<sequence length="198" mass="21950">MIIDLIWIITSYVIGSIPFGVLFANIFCGIDPRTLGSGNVGATNITRICGRKLGFITLFFDVLKGFFPVVIATYLSESPFMYTMTGLAAIIGHLYSCFLHFKGGKAVATSIGVLIPIAFWQLLFAAILCTFFIWRSGFVSLGSLVLVTSLPIILFITGKFAYIPLSLIIMALIFWSHKQNIQRLIKGEEKVWKHSESI</sequence>
<gene>
    <name evidence="1" type="primary">plsY</name>
    <name type="ordered locus">LI0198</name>
</gene>
<comment type="function">
    <text evidence="1">Catalyzes the transfer of an acyl group from acyl-phosphate (acyl-PO(4)) to glycerol-3-phosphate (G3P) to form lysophosphatidic acid (LPA). This enzyme utilizes acyl-phosphate as fatty acyl donor, but not acyl-CoA or acyl-ACP.</text>
</comment>
<comment type="catalytic activity">
    <reaction evidence="1">
        <text>an acyl phosphate + sn-glycerol 3-phosphate = a 1-acyl-sn-glycero-3-phosphate + phosphate</text>
        <dbReference type="Rhea" id="RHEA:34075"/>
        <dbReference type="ChEBI" id="CHEBI:43474"/>
        <dbReference type="ChEBI" id="CHEBI:57597"/>
        <dbReference type="ChEBI" id="CHEBI:57970"/>
        <dbReference type="ChEBI" id="CHEBI:59918"/>
        <dbReference type="EC" id="2.3.1.275"/>
    </reaction>
</comment>
<comment type="pathway">
    <text evidence="1">Lipid metabolism; phospholipid metabolism.</text>
</comment>
<comment type="subunit">
    <text evidence="1">Probably interacts with PlsX.</text>
</comment>
<comment type="subcellular location">
    <subcellularLocation>
        <location evidence="1">Cell membrane</location>
        <topology evidence="1">Multi-pass membrane protein</topology>
    </subcellularLocation>
</comment>
<comment type="similarity">
    <text evidence="1">Belongs to the PlsY family.</text>
</comment>
<name>PLSY_LAWIP</name>
<proteinExistence type="inferred from homology"/>
<keyword id="KW-1003">Cell membrane</keyword>
<keyword id="KW-0444">Lipid biosynthesis</keyword>
<keyword id="KW-0443">Lipid metabolism</keyword>
<keyword id="KW-0472">Membrane</keyword>
<keyword id="KW-0594">Phospholipid biosynthesis</keyword>
<keyword id="KW-1208">Phospholipid metabolism</keyword>
<keyword id="KW-1185">Reference proteome</keyword>
<keyword id="KW-0808">Transferase</keyword>
<keyword id="KW-0812">Transmembrane</keyword>
<keyword id="KW-1133">Transmembrane helix</keyword>
<accession>Q1MRX2</accession>
<protein>
    <recommendedName>
        <fullName evidence="1">Glycerol-3-phosphate acyltransferase</fullName>
    </recommendedName>
    <alternativeName>
        <fullName evidence="1">Acyl-PO4 G3P acyltransferase</fullName>
    </alternativeName>
    <alternativeName>
        <fullName evidence="1">Acyl-phosphate--glycerol-3-phosphate acyltransferase</fullName>
    </alternativeName>
    <alternativeName>
        <fullName evidence="1">G3P acyltransferase</fullName>
        <shortName evidence="1">GPAT</shortName>
        <ecNumber evidence="1">2.3.1.275</ecNumber>
    </alternativeName>
    <alternativeName>
        <fullName evidence="1">Lysophosphatidic acid synthase</fullName>
        <shortName evidence="1">LPA synthase</shortName>
    </alternativeName>
</protein>